<proteinExistence type="inferred from homology"/>
<gene>
    <name evidence="1" type="primary">zntB</name>
    <name type="ordered locus">Ecok1_12990</name>
    <name type="ORF">APECO1_494</name>
</gene>
<organism>
    <name type="scientific">Escherichia coli O1:K1 / APEC</name>
    <dbReference type="NCBI Taxonomy" id="405955"/>
    <lineage>
        <taxon>Bacteria</taxon>
        <taxon>Pseudomonadati</taxon>
        <taxon>Pseudomonadota</taxon>
        <taxon>Gammaproteobacteria</taxon>
        <taxon>Enterobacterales</taxon>
        <taxon>Enterobacteriaceae</taxon>
        <taxon>Escherichia</taxon>
    </lineage>
</organism>
<comment type="function">
    <text evidence="1">Zinc transporter. Acts as a Zn(2+):proton symporter, which likely mediates zinc ion uptake.</text>
</comment>
<comment type="catalytic activity">
    <reaction evidence="1">
        <text>Zn(2+)(out) + H(+)(out) = Zn(2+)(in) + H(+)(in)</text>
        <dbReference type="Rhea" id="RHEA:71195"/>
        <dbReference type="ChEBI" id="CHEBI:15378"/>
        <dbReference type="ChEBI" id="CHEBI:29105"/>
    </reaction>
    <physiologicalReaction direction="left-to-right" evidence="1">
        <dbReference type="Rhea" id="RHEA:71196"/>
    </physiologicalReaction>
</comment>
<comment type="subcellular location">
    <subcellularLocation>
        <location evidence="1">Cell inner membrane</location>
        <topology evidence="1">Multi-pass membrane protein</topology>
    </subcellularLocation>
</comment>
<comment type="similarity">
    <text evidence="1">Belongs to the CorA metal ion transporter (MIT) (TC 1.A.35) family.</text>
</comment>
<feature type="chain" id="PRO_1000069070" description="Zinc transport protein ZntB">
    <location>
        <begin position="1"/>
        <end position="327"/>
    </location>
</feature>
<feature type="topological domain" description="Cytoplasmic" evidence="1">
    <location>
        <begin position="1"/>
        <end position="273"/>
    </location>
</feature>
<feature type="transmembrane region" description="Helical" evidence="1">
    <location>
        <begin position="274"/>
        <end position="294"/>
    </location>
</feature>
<feature type="topological domain" description="Periplasmic" evidence="1">
    <location>
        <begin position="295"/>
        <end position="300"/>
    </location>
</feature>
<feature type="transmembrane region" description="Helical" evidence="1">
    <location>
        <begin position="301"/>
        <end position="321"/>
    </location>
</feature>
<feature type="topological domain" description="Cytoplasmic" evidence="1">
    <location>
        <begin position="322"/>
        <end position="327"/>
    </location>
</feature>
<protein>
    <recommendedName>
        <fullName evidence="1">Zinc transport protein ZntB</fullName>
    </recommendedName>
</protein>
<reference key="1">
    <citation type="journal article" date="2007" name="J. Bacteriol.">
        <title>The genome sequence of avian pathogenic Escherichia coli strain O1:K1:H7 shares strong similarities with human extraintestinal pathogenic E. coli genomes.</title>
        <authorList>
            <person name="Johnson T.J."/>
            <person name="Kariyawasam S."/>
            <person name="Wannemuehler Y."/>
            <person name="Mangiamele P."/>
            <person name="Johnson S.J."/>
            <person name="Doetkott C."/>
            <person name="Skyberg J.A."/>
            <person name="Lynne A.M."/>
            <person name="Johnson J.R."/>
            <person name="Nolan L.K."/>
        </authorList>
    </citation>
    <scope>NUCLEOTIDE SEQUENCE [LARGE SCALE GENOMIC DNA]</scope>
</reference>
<keyword id="KW-0997">Cell inner membrane</keyword>
<keyword id="KW-1003">Cell membrane</keyword>
<keyword id="KW-0406">Ion transport</keyword>
<keyword id="KW-0472">Membrane</keyword>
<keyword id="KW-1185">Reference proteome</keyword>
<keyword id="KW-0812">Transmembrane</keyword>
<keyword id="KW-1133">Transmembrane helix</keyword>
<keyword id="KW-0813">Transport</keyword>
<keyword id="KW-0862">Zinc</keyword>
<accession>A1AAV3</accession>
<name>ZNTB_ECOK1</name>
<evidence type="ECO:0000255" key="1">
    <source>
        <dbReference type="HAMAP-Rule" id="MF_01565"/>
    </source>
</evidence>
<dbReference type="EMBL" id="CP000468">
    <property type="protein sequence ID" value="ABJ00793.1"/>
    <property type="molecule type" value="Genomic_DNA"/>
</dbReference>
<dbReference type="RefSeq" id="WP_000387388.1">
    <property type="nucleotide sequence ID" value="NZ_CADILS010000001.1"/>
</dbReference>
<dbReference type="SMR" id="A1AAV3"/>
<dbReference type="GeneID" id="93775479"/>
<dbReference type="KEGG" id="ecv:APECO1_494"/>
<dbReference type="HOGENOM" id="CLU_007127_2_0_6"/>
<dbReference type="Proteomes" id="UP000008216">
    <property type="component" value="Chromosome"/>
</dbReference>
<dbReference type="GO" id="GO:0005886">
    <property type="term" value="C:plasma membrane"/>
    <property type="evidence" value="ECO:0007669"/>
    <property type="project" value="UniProtKB-SubCell"/>
</dbReference>
<dbReference type="GO" id="GO:0050897">
    <property type="term" value="F:cobalt ion binding"/>
    <property type="evidence" value="ECO:0007669"/>
    <property type="project" value="TreeGrafter"/>
</dbReference>
<dbReference type="GO" id="GO:0015087">
    <property type="term" value="F:cobalt ion transmembrane transporter activity"/>
    <property type="evidence" value="ECO:0007669"/>
    <property type="project" value="TreeGrafter"/>
</dbReference>
<dbReference type="GO" id="GO:0000287">
    <property type="term" value="F:magnesium ion binding"/>
    <property type="evidence" value="ECO:0007669"/>
    <property type="project" value="TreeGrafter"/>
</dbReference>
<dbReference type="GO" id="GO:0015095">
    <property type="term" value="F:magnesium ion transmembrane transporter activity"/>
    <property type="evidence" value="ECO:0007669"/>
    <property type="project" value="TreeGrafter"/>
</dbReference>
<dbReference type="GO" id="GO:0005385">
    <property type="term" value="F:zinc ion transmembrane transporter activity"/>
    <property type="evidence" value="ECO:0007669"/>
    <property type="project" value="UniProtKB-UniRule"/>
</dbReference>
<dbReference type="CDD" id="cd12833">
    <property type="entry name" value="ZntB-like_1"/>
    <property type="match status" value="1"/>
</dbReference>
<dbReference type="FunFam" id="1.20.58.340:FF:000002">
    <property type="entry name" value="Zinc transport protein ZntB"/>
    <property type="match status" value="1"/>
</dbReference>
<dbReference type="FunFam" id="1.20.58.340:FF:000003">
    <property type="entry name" value="Zinc transport protein ZntB"/>
    <property type="match status" value="1"/>
</dbReference>
<dbReference type="FunFam" id="3.30.460.20:FF:000001">
    <property type="entry name" value="Zinc transport protein ZntB"/>
    <property type="match status" value="1"/>
</dbReference>
<dbReference type="Gene3D" id="3.30.460.20">
    <property type="entry name" value="CorA soluble domain-like"/>
    <property type="match status" value="1"/>
</dbReference>
<dbReference type="Gene3D" id="1.20.58.340">
    <property type="entry name" value="Magnesium transport protein CorA, transmembrane region"/>
    <property type="match status" value="2"/>
</dbReference>
<dbReference type="HAMAP" id="MF_01565">
    <property type="entry name" value="ZntB"/>
    <property type="match status" value="1"/>
</dbReference>
<dbReference type="InterPro" id="IPR045861">
    <property type="entry name" value="CorA_cytoplasmic_dom"/>
</dbReference>
<dbReference type="InterPro" id="IPR045863">
    <property type="entry name" value="CorA_TM1_TM2"/>
</dbReference>
<dbReference type="InterPro" id="IPR002523">
    <property type="entry name" value="MgTranspt_CorA/ZnTranspt_ZntB"/>
</dbReference>
<dbReference type="InterPro" id="IPR023714">
    <property type="entry name" value="Zn_transp_ZntB"/>
</dbReference>
<dbReference type="NCBIfam" id="NF007092">
    <property type="entry name" value="PRK09546.1"/>
    <property type="match status" value="1"/>
</dbReference>
<dbReference type="PANTHER" id="PTHR46494">
    <property type="entry name" value="CORA FAMILY METAL ION TRANSPORTER (EUROFUNG)"/>
    <property type="match status" value="1"/>
</dbReference>
<dbReference type="PANTHER" id="PTHR46494:SF3">
    <property type="entry name" value="ZINC TRANSPORT PROTEIN ZNTB"/>
    <property type="match status" value="1"/>
</dbReference>
<dbReference type="Pfam" id="PF01544">
    <property type="entry name" value="CorA"/>
    <property type="match status" value="1"/>
</dbReference>
<dbReference type="SUPFAM" id="SSF143865">
    <property type="entry name" value="CorA soluble domain-like"/>
    <property type="match status" value="1"/>
</dbReference>
<dbReference type="SUPFAM" id="SSF144083">
    <property type="entry name" value="Magnesium transport protein CorA, transmembrane region"/>
    <property type="match status" value="1"/>
</dbReference>
<sequence length="327" mass="36612">MEAIKGSDVNVPDAVFAWMLDGRGGVKPLENTDVIDEAHPCWLHLNYVHHDSAQWLATTPLLPNNVRDALAGESTRPRVSRLGEGTLITLRCINGSTDERPDQLVAMRVYMDGRLIVSTRQRKVLALDDVVSDLEEGTGPTDCGGWLVDVCDALTDHSSEFIEQLHDKIIDLEDNLLDQQIPPRGFLALLRKQLIVMRRYMAPQRDVYARLASERLPWMSDDQRRRMQDIADRLGRGLDEIDACIARTGVMADEIAQVMQENLARRTYTMSLMAMVFLPSTFLTGLFGVNLGGIPGGGWQFGFSIFCILLVVLIGGVALWLHRSKWL</sequence>